<proteinExistence type="evidence at transcript level"/>
<feature type="chain" id="PRO_0000173566" description="Transaldolase">
    <location>
        <begin position="1"/>
        <end position="337"/>
    </location>
</feature>
<feature type="short sequence motif" description="Nuclear localization signal" evidence="2">
    <location>
        <begin position="1"/>
        <end position="10"/>
    </location>
</feature>
<feature type="active site" description="Schiff-base intermediate with substrate" evidence="1">
    <location>
        <position position="142"/>
    </location>
</feature>
<feature type="modified residue" description="N6-acetyllysine" evidence="1">
    <location>
        <position position="219"/>
    </location>
</feature>
<feature type="modified residue" description="Phosphoserine" evidence="1">
    <location>
        <position position="237"/>
    </location>
</feature>
<feature type="modified residue" description="Phosphoserine" evidence="1">
    <location>
        <position position="256"/>
    </location>
</feature>
<feature type="modified residue" description="N6-acetyllysine" evidence="1">
    <location>
        <position position="269"/>
    </location>
</feature>
<feature type="modified residue" description="N6-acetyllysine" evidence="1">
    <location>
        <position position="286"/>
    </location>
</feature>
<feature type="modified residue" description="N6-acetyllysine" evidence="1">
    <location>
        <position position="321"/>
    </location>
</feature>
<feature type="sequence conflict" description="In Ref. 2; CAA23240." evidence="3" ref="2">
    <original>A</original>
    <variation>V</variation>
    <location>
        <position position="57"/>
    </location>
</feature>
<gene>
    <name type="primary">TALDO1</name>
</gene>
<protein>
    <recommendedName>
        <fullName>Transaldolase</fullName>
        <ecNumber evidence="1">2.2.1.2</ecNumber>
    </recommendedName>
</protein>
<name>TALDO_PIG</name>
<comment type="function">
    <text evidence="2">Catalyzes the rate-limiting step of the non-oxidative phase in the pentose phosphate pathway. Catalyzes the reversible conversion of sedheptulose-7-phosphate and D-glyceraldehyde 3-phosphate into erythrose-4-phosphate and beta-D-fructose 6-phosphate.</text>
</comment>
<comment type="catalytic activity">
    <reaction evidence="1">
        <text>D-sedoheptulose 7-phosphate + D-glyceraldehyde 3-phosphate = D-erythrose 4-phosphate + beta-D-fructose 6-phosphate</text>
        <dbReference type="Rhea" id="RHEA:17053"/>
        <dbReference type="ChEBI" id="CHEBI:16897"/>
        <dbReference type="ChEBI" id="CHEBI:57483"/>
        <dbReference type="ChEBI" id="CHEBI:57634"/>
        <dbReference type="ChEBI" id="CHEBI:59776"/>
        <dbReference type="EC" id="2.2.1.2"/>
    </reaction>
    <physiologicalReaction direction="left-to-right" evidence="1">
        <dbReference type="Rhea" id="RHEA:17054"/>
    </physiologicalReaction>
    <physiologicalReaction direction="right-to-left" evidence="1">
        <dbReference type="Rhea" id="RHEA:17055"/>
    </physiologicalReaction>
</comment>
<comment type="pathway">
    <text evidence="2">Carbohydrate degradation; pentose phosphate pathway; D-glyceraldehyde 3-phosphate and beta-D-fructose 6-phosphate from D-ribose 5-phosphate and D-xylulose 5-phosphate (non-oxidative stage): step 2/3.</text>
</comment>
<comment type="subunit">
    <text evidence="2">Homodimer. Interacts with KPNA1 and KPNA4.</text>
</comment>
<comment type="subcellular location">
    <subcellularLocation>
        <location evidence="2">Nucleus</location>
    </subcellularLocation>
    <subcellularLocation>
        <location evidence="2">Cytoplasm</location>
    </subcellularLocation>
    <text evidence="2">Shuttles between the nucleus and the cytoplasm. Actively transported into the nucleus in an importin alpha/beta-dependent manner. Exported into the cytoplasm by CRM1.</text>
</comment>
<comment type="domain">
    <text evidence="2">The first 10 amino acids are essential for nuclear localization.</text>
</comment>
<comment type="similarity">
    <text evidence="3">Belongs to the transaldolase family. Type 1 subfamily.</text>
</comment>
<reference key="1">
    <citation type="submission" date="2009-11" db="EMBL/GenBank/DDBJ databases">
        <authorList>
            <consortium name="Porcine genome sequencing project"/>
        </authorList>
    </citation>
    <scope>NUCLEOTIDE SEQUENCE [LARGE SCALE GENOMIC DNA]</scope>
    <source>
        <strain>Duroc</strain>
    </source>
</reference>
<reference evidence="3" key="2">
    <citation type="journal article" date="1996" name="Mamm. Genome">
        <title>Evaluation and characterization of a porcine small intestine cDNA library: analysis of 839 clones.</title>
        <authorList>
            <person name="Winteroe A.K."/>
            <person name="Fredholm M."/>
            <person name="Davies W."/>
        </authorList>
    </citation>
    <scope>NUCLEOTIDE SEQUENCE [LARGE SCALE MRNA] OF 4-64</scope>
    <source>
        <tissue evidence="4">Small intestine</tissue>
    </source>
</reference>
<evidence type="ECO:0000250" key="1">
    <source>
        <dbReference type="UniProtKB" id="P37837"/>
    </source>
</evidence>
<evidence type="ECO:0000250" key="2">
    <source>
        <dbReference type="UniProtKB" id="Q93092"/>
    </source>
</evidence>
<evidence type="ECO:0000305" key="3"/>
<evidence type="ECO:0000312" key="4">
    <source>
        <dbReference type="EMBL" id="CAA23240.1"/>
    </source>
</evidence>
<accession>Q29593</accession>
<accession>F1RYY6</accession>
<organism evidence="4">
    <name type="scientific">Sus scrofa</name>
    <name type="common">Pig</name>
    <dbReference type="NCBI Taxonomy" id="9823"/>
    <lineage>
        <taxon>Eukaryota</taxon>
        <taxon>Metazoa</taxon>
        <taxon>Chordata</taxon>
        <taxon>Craniata</taxon>
        <taxon>Vertebrata</taxon>
        <taxon>Euteleostomi</taxon>
        <taxon>Mammalia</taxon>
        <taxon>Eutheria</taxon>
        <taxon>Laurasiatheria</taxon>
        <taxon>Artiodactyla</taxon>
        <taxon>Suina</taxon>
        <taxon>Suidae</taxon>
        <taxon>Sus</taxon>
    </lineage>
</organism>
<dbReference type="EC" id="2.2.1.2" evidence="1"/>
<dbReference type="EMBL" id="F14769">
    <property type="protein sequence ID" value="CAA23240.1"/>
    <property type="molecule type" value="mRNA"/>
</dbReference>
<dbReference type="EMBL" id="AEMK02000006">
    <property type="status" value="NOT_ANNOTATED_CDS"/>
    <property type="molecule type" value="Genomic_DNA"/>
</dbReference>
<dbReference type="SMR" id="Q29593"/>
<dbReference type="STRING" id="9823.ENSSSCP00000058258"/>
<dbReference type="PaxDb" id="9823-ENSSSCP00000013657"/>
<dbReference type="PeptideAtlas" id="Q29593"/>
<dbReference type="Ensembl" id="ENSSSCT00000014042.5">
    <property type="protein sequence ID" value="ENSSSCP00000013657.3"/>
    <property type="gene ID" value="ENSSSCG00000012847.5"/>
</dbReference>
<dbReference type="Ensembl" id="ENSSSCT00025017848.1">
    <property type="protein sequence ID" value="ENSSSCP00025007145.1"/>
    <property type="gene ID" value="ENSSSCG00025013424.1"/>
</dbReference>
<dbReference type="Ensembl" id="ENSSSCT00030048223.1">
    <property type="protein sequence ID" value="ENSSSCP00030021775.1"/>
    <property type="gene ID" value="ENSSSCG00030034824.1"/>
</dbReference>
<dbReference type="Ensembl" id="ENSSSCT00035092018.1">
    <property type="protein sequence ID" value="ENSSSCP00035038590.1"/>
    <property type="gene ID" value="ENSSSCG00035068177.1"/>
</dbReference>
<dbReference type="Ensembl" id="ENSSSCT00040047156.1">
    <property type="protein sequence ID" value="ENSSSCP00040019748.1"/>
    <property type="gene ID" value="ENSSSCG00040034901.1"/>
</dbReference>
<dbReference type="Ensembl" id="ENSSSCT00045022789.1">
    <property type="protein sequence ID" value="ENSSSCP00045015722.1"/>
    <property type="gene ID" value="ENSSSCG00045013334.1"/>
</dbReference>
<dbReference type="Ensembl" id="ENSSSCT00050045837.1">
    <property type="protein sequence ID" value="ENSSSCP00050018837.1"/>
    <property type="gene ID" value="ENSSSCG00050034181.1"/>
</dbReference>
<dbReference type="Ensembl" id="ENSSSCT00055005880.1">
    <property type="protein sequence ID" value="ENSSSCP00055004593.1"/>
    <property type="gene ID" value="ENSSSCG00055003013.1"/>
</dbReference>
<dbReference type="Ensembl" id="ENSSSCT00060054831.1">
    <property type="protein sequence ID" value="ENSSSCP00060023391.1"/>
    <property type="gene ID" value="ENSSSCG00060040459.1"/>
</dbReference>
<dbReference type="Ensembl" id="ENSSSCT00065049158.1">
    <property type="protein sequence ID" value="ENSSSCP00065021267.1"/>
    <property type="gene ID" value="ENSSSCG00065036051.1"/>
</dbReference>
<dbReference type="Ensembl" id="ENSSSCT00070055159.1">
    <property type="protein sequence ID" value="ENSSSCP00070046808.1"/>
    <property type="gene ID" value="ENSSSCG00070027509.1"/>
</dbReference>
<dbReference type="Ensembl" id="ENSSSCT00105050334">
    <property type="protein sequence ID" value="ENSSSCP00105035442"/>
    <property type="gene ID" value="ENSSSCG00105026481"/>
</dbReference>
<dbReference type="Ensembl" id="ENSSSCT00115030710">
    <property type="protein sequence ID" value="ENSSSCP00115029195"/>
    <property type="gene ID" value="ENSSSCG00115017391"/>
</dbReference>
<dbReference type="Ensembl" id="ENSSSCT00130073732">
    <property type="protein sequence ID" value="ENSSSCP00130053144"/>
    <property type="gene ID" value="ENSSSCG00130037736"/>
</dbReference>
<dbReference type="VGNC" id="VGNC:100870">
    <property type="gene designation" value="TALDO1"/>
</dbReference>
<dbReference type="eggNOG" id="KOG2772">
    <property type="taxonomic scope" value="Eukaryota"/>
</dbReference>
<dbReference type="GeneTree" id="ENSGT00390000017361"/>
<dbReference type="HOGENOM" id="CLU_047470_0_1_1"/>
<dbReference type="InParanoid" id="Q29593"/>
<dbReference type="OMA" id="THAEFLW"/>
<dbReference type="TreeFam" id="TF300757"/>
<dbReference type="Reactome" id="R-SSC-163754">
    <property type="pathway name" value="Insulin effects increased synthesis of Xylulose-5-Phosphate"/>
</dbReference>
<dbReference type="Reactome" id="R-SSC-71336">
    <property type="pathway name" value="Pentose phosphate pathway"/>
</dbReference>
<dbReference type="UniPathway" id="UPA00115">
    <property type="reaction ID" value="UER00414"/>
</dbReference>
<dbReference type="Proteomes" id="UP000008227">
    <property type="component" value="Chromosome 2"/>
</dbReference>
<dbReference type="Proteomes" id="UP000314985">
    <property type="component" value="Chromosome 2"/>
</dbReference>
<dbReference type="Proteomes" id="UP000694570">
    <property type="component" value="Unplaced"/>
</dbReference>
<dbReference type="Proteomes" id="UP000694571">
    <property type="component" value="Unplaced"/>
</dbReference>
<dbReference type="Proteomes" id="UP000694720">
    <property type="component" value="Unplaced"/>
</dbReference>
<dbReference type="Proteomes" id="UP000694722">
    <property type="component" value="Unplaced"/>
</dbReference>
<dbReference type="Proteomes" id="UP000694723">
    <property type="component" value="Unplaced"/>
</dbReference>
<dbReference type="Proteomes" id="UP000694724">
    <property type="component" value="Unplaced"/>
</dbReference>
<dbReference type="Proteomes" id="UP000694725">
    <property type="component" value="Unplaced"/>
</dbReference>
<dbReference type="Proteomes" id="UP000694726">
    <property type="component" value="Unplaced"/>
</dbReference>
<dbReference type="Proteomes" id="UP000694727">
    <property type="component" value="Unplaced"/>
</dbReference>
<dbReference type="Proteomes" id="UP000694728">
    <property type="component" value="Unplaced"/>
</dbReference>
<dbReference type="Bgee" id="ENSSSCG00000012847">
    <property type="expression patterns" value="Expressed in blood and 43 other cell types or tissues"/>
</dbReference>
<dbReference type="GO" id="GO:0005737">
    <property type="term" value="C:cytoplasm"/>
    <property type="evidence" value="ECO:0000250"/>
    <property type="project" value="UniProtKB"/>
</dbReference>
<dbReference type="GO" id="GO:0005634">
    <property type="term" value="C:nucleus"/>
    <property type="evidence" value="ECO:0000250"/>
    <property type="project" value="UniProtKB"/>
</dbReference>
<dbReference type="GO" id="GO:0042802">
    <property type="term" value="F:identical protein binding"/>
    <property type="evidence" value="ECO:0000250"/>
    <property type="project" value="UniProtKB"/>
</dbReference>
<dbReference type="GO" id="GO:0004801">
    <property type="term" value="F:transaldolase activity"/>
    <property type="evidence" value="ECO:0000250"/>
    <property type="project" value="UniProtKB"/>
</dbReference>
<dbReference type="GO" id="GO:0005975">
    <property type="term" value="P:carbohydrate metabolic process"/>
    <property type="evidence" value="ECO:0007669"/>
    <property type="project" value="InterPro"/>
</dbReference>
<dbReference type="GO" id="GO:0006098">
    <property type="term" value="P:pentose-phosphate shunt"/>
    <property type="evidence" value="ECO:0000250"/>
    <property type="project" value="UniProtKB"/>
</dbReference>
<dbReference type="GO" id="GO:0009052">
    <property type="term" value="P:pentose-phosphate shunt, non-oxidative branch"/>
    <property type="evidence" value="ECO:0000318"/>
    <property type="project" value="GO_Central"/>
</dbReference>
<dbReference type="CDD" id="cd00957">
    <property type="entry name" value="Transaldolase_TalAB"/>
    <property type="match status" value="1"/>
</dbReference>
<dbReference type="FunFam" id="3.20.20.70:FF:000002">
    <property type="entry name" value="Transaldolase"/>
    <property type="match status" value="1"/>
</dbReference>
<dbReference type="Gene3D" id="3.20.20.70">
    <property type="entry name" value="Aldolase class I"/>
    <property type="match status" value="1"/>
</dbReference>
<dbReference type="HAMAP" id="MF_00492">
    <property type="entry name" value="Transaldolase_1"/>
    <property type="match status" value="1"/>
</dbReference>
<dbReference type="InterPro" id="IPR013785">
    <property type="entry name" value="Aldolase_TIM"/>
</dbReference>
<dbReference type="InterPro" id="IPR001585">
    <property type="entry name" value="TAL/FSA"/>
</dbReference>
<dbReference type="InterPro" id="IPR004730">
    <property type="entry name" value="Transaldolase_1"/>
</dbReference>
<dbReference type="InterPro" id="IPR018225">
    <property type="entry name" value="Transaldolase_AS"/>
</dbReference>
<dbReference type="NCBIfam" id="NF009001">
    <property type="entry name" value="PRK12346.1"/>
    <property type="match status" value="1"/>
</dbReference>
<dbReference type="NCBIfam" id="TIGR00874">
    <property type="entry name" value="talAB"/>
    <property type="match status" value="1"/>
</dbReference>
<dbReference type="PANTHER" id="PTHR10683">
    <property type="entry name" value="TRANSALDOLASE"/>
    <property type="match status" value="1"/>
</dbReference>
<dbReference type="PANTHER" id="PTHR10683:SF18">
    <property type="entry name" value="TRANSALDOLASE"/>
    <property type="match status" value="1"/>
</dbReference>
<dbReference type="Pfam" id="PF00923">
    <property type="entry name" value="TAL_FSA"/>
    <property type="match status" value="1"/>
</dbReference>
<dbReference type="SUPFAM" id="SSF51569">
    <property type="entry name" value="Aldolase"/>
    <property type="match status" value="1"/>
</dbReference>
<dbReference type="PROSITE" id="PS01054">
    <property type="entry name" value="TRANSALDOLASE_1"/>
    <property type="match status" value="1"/>
</dbReference>
<dbReference type="PROSITE" id="PS00958">
    <property type="entry name" value="TRANSALDOLASE_2"/>
    <property type="match status" value="1"/>
</dbReference>
<keyword id="KW-0007">Acetylation</keyword>
<keyword id="KW-0963">Cytoplasm</keyword>
<keyword id="KW-0539">Nucleus</keyword>
<keyword id="KW-0570">Pentose shunt</keyword>
<keyword id="KW-0597">Phosphoprotein</keyword>
<keyword id="KW-1185">Reference proteome</keyword>
<keyword id="KW-0704">Schiff base</keyword>
<keyword id="KW-0808">Transferase</keyword>
<sequence length="337" mass="37418">MSGSPVKRQRMESALDQLKQFTTVVADTGDFNAIDEYKPQDATTNPSLILAAAQMPAYQELVEEALAYGKRLGGSQEEQVTNAVDKLFVLFGAEILKKIPGRVSTEVDARLSFDRDAMVARARRLIELYKEAGVSKDRVLIKLASTWEGIQAGKELEEQHGIHCNMTLLFSFAQAVACAEAGVTLISPFVGRILDWHVANTDQKSYEPLEDPGVKSVTKIYNYYKKFGYKTIVMGASFRNTGEIKALAGCDFLTISPQLLGELLKDTSKLVPMLSAKAAQASPLEKVHLDEKAFRWLHNEDRMAVEKLSDGIRKFAADAVKLERMLTERMFSTENGK</sequence>